<comment type="function">
    <text evidence="1">Catalyzes the ATP-dependent phosphorylation of the 3-deoxy-D-manno-octulosonic acid (Kdo) residue in Kdo-lipid IV(A) at the 4-OH position.</text>
</comment>
<comment type="catalytic activity">
    <reaction evidence="1">
        <text>an alpha-Kdo-(2-&gt;6)-lipid IVA + ATP = a 4-O-phospho-alpha-Kdo-(2-&gt;6)-lipid IVA + ADP + H(+)</text>
        <dbReference type="Rhea" id="RHEA:74271"/>
        <dbReference type="ChEBI" id="CHEBI:15378"/>
        <dbReference type="ChEBI" id="CHEBI:30616"/>
        <dbReference type="ChEBI" id="CHEBI:176428"/>
        <dbReference type="ChEBI" id="CHEBI:193140"/>
        <dbReference type="ChEBI" id="CHEBI:456216"/>
        <dbReference type="EC" id="2.7.1.166"/>
    </reaction>
</comment>
<comment type="pathway">
    <text evidence="1">Bacterial outer membrane biogenesis; LPS core biosynthesis.</text>
</comment>
<comment type="subcellular location">
    <subcellularLocation>
        <location evidence="1">Cell inner membrane</location>
        <topology evidence="1">Peripheral membrane protein</topology>
        <orientation evidence="1">Cytoplasmic side</orientation>
    </subcellularLocation>
</comment>
<comment type="similarity">
    <text evidence="1">Belongs to the protein kinase superfamily. KdkA/RfaP family.</text>
</comment>
<keyword id="KW-0067">ATP-binding</keyword>
<keyword id="KW-0997">Cell inner membrane</keyword>
<keyword id="KW-1003">Cell membrane</keyword>
<keyword id="KW-0418">Kinase</keyword>
<keyword id="KW-0448">Lipopolysaccharide biosynthesis</keyword>
<keyword id="KW-0472">Membrane</keyword>
<keyword id="KW-0547">Nucleotide-binding</keyword>
<keyword id="KW-0808">Transferase</keyword>
<feature type="chain" id="PRO_1000050916" description="3-deoxy-D-manno-octulosonic acid kinase">
    <location>
        <begin position="1"/>
        <end position="241"/>
    </location>
</feature>
<feature type="active site" evidence="1">
    <location>
        <position position="171"/>
    </location>
</feature>
<organism>
    <name type="scientific">Haemophilus influenzae (strain PittGG)</name>
    <dbReference type="NCBI Taxonomy" id="374931"/>
    <lineage>
        <taxon>Bacteria</taxon>
        <taxon>Pseudomonadati</taxon>
        <taxon>Pseudomonadota</taxon>
        <taxon>Gammaproteobacteria</taxon>
        <taxon>Pasteurellales</taxon>
        <taxon>Pasteurellaceae</taxon>
        <taxon>Haemophilus</taxon>
    </lineage>
</organism>
<dbReference type="EC" id="2.7.1.166" evidence="1"/>
<dbReference type="EMBL" id="CP000672">
    <property type="protein sequence ID" value="ABQ99786.1"/>
    <property type="molecule type" value="Genomic_DNA"/>
</dbReference>
<dbReference type="SMR" id="A5UG81"/>
<dbReference type="KEGG" id="hiq:CGSHiGG_04085"/>
<dbReference type="HOGENOM" id="CLU_094226_0_0_6"/>
<dbReference type="UniPathway" id="UPA00958"/>
<dbReference type="Proteomes" id="UP000001990">
    <property type="component" value="Chromosome"/>
</dbReference>
<dbReference type="GO" id="GO:0005886">
    <property type="term" value="C:plasma membrane"/>
    <property type="evidence" value="ECO:0007669"/>
    <property type="project" value="UniProtKB-SubCell"/>
</dbReference>
<dbReference type="GO" id="GO:0005524">
    <property type="term" value="F:ATP binding"/>
    <property type="evidence" value="ECO:0007669"/>
    <property type="project" value="UniProtKB-UniRule"/>
</dbReference>
<dbReference type="GO" id="GO:0016301">
    <property type="term" value="F:kinase activity"/>
    <property type="evidence" value="ECO:0007669"/>
    <property type="project" value="UniProtKB-KW"/>
</dbReference>
<dbReference type="GO" id="GO:0016773">
    <property type="term" value="F:phosphotransferase activity, alcohol group as acceptor"/>
    <property type="evidence" value="ECO:0007669"/>
    <property type="project" value="UniProtKB-UniRule"/>
</dbReference>
<dbReference type="GO" id="GO:0009244">
    <property type="term" value="P:lipopolysaccharide core region biosynthetic process"/>
    <property type="evidence" value="ECO:0007669"/>
    <property type="project" value="UniProtKB-UniRule"/>
</dbReference>
<dbReference type="Gene3D" id="1.10.510.10">
    <property type="entry name" value="Transferase(Phosphotransferase) domain 1"/>
    <property type="match status" value="1"/>
</dbReference>
<dbReference type="HAMAP" id="MF_00521">
    <property type="entry name" value="KDO_kinase"/>
    <property type="match status" value="1"/>
</dbReference>
<dbReference type="InterPro" id="IPR022826">
    <property type="entry name" value="KDO_kinase"/>
</dbReference>
<dbReference type="InterPro" id="IPR011009">
    <property type="entry name" value="Kinase-like_dom_sf"/>
</dbReference>
<dbReference type="NCBIfam" id="NF002475">
    <property type="entry name" value="PRK01723.1"/>
    <property type="match status" value="1"/>
</dbReference>
<dbReference type="Pfam" id="PF06293">
    <property type="entry name" value="Kdo"/>
    <property type="match status" value="1"/>
</dbReference>
<dbReference type="SUPFAM" id="SSF56112">
    <property type="entry name" value="Protein kinase-like (PK-like)"/>
    <property type="match status" value="1"/>
</dbReference>
<gene>
    <name evidence="1" type="primary">kdkA</name>
    <name type="ordered locus">CGSHiGG_04085</name>
</gene>
<accession>A5UG81</accession>
<name>KDKA_HAEIG</name>
<evidence type="ECO:0000255" key="1">
    <source>
        <dbReference type="HAMAP-Rule" id="MF_00521"/>
    </source>
</evidence>
<reference key="1">
    <citation type="journal article" date="2007" name="Genome Biol.">
        <title>Characterization and modeling of the Haemophilus influenzae core and supragenomes based on the complete genomic sequences of Rd and 12 clinical nontypeable strains.</title>
        <authorList>
            <person name="Hogg J.S."/>
            <person name="Hu F.Z."/>
            <person name="Janto B."/>
            <person name="Boissy R."/>
            <person name="Hayes J."/>
            <person name="Keefe R."/>
            <person name="Post J.C."/>
            <person name="Ehrlich G.D."/>
        </authorList>
    </citation>
    <scope>NUCLEOTIDE SEQUENCE [LARGE SCALE GENOMIC DNA]</scope>
    <source>
        <strain>PittGG</strain>
    </source>
</reference>
<sequence length="241" mass="28785">MYQFQQDNQYFIFNFDRTFDQATEFFQAEFWQKQERVIGSAKGRGTTYFLQTEDWFGVNCALRHYYRGGLWGKLNKDRYRFSDLETTRSFAEFHLLQRLYEAGFPVPKPIAARIQKGKLGICYQADILTEKIENAQDLTALLQTQTLPKETWTQIGRLIRKLHDLQICHTDLNAHNILLQQIEQEQKCWLLDFDKCGEKSGDFWKVQNLNRLKRSFEKEIRRMNIQFTEQNWADLTAAYHQ</sequence>
<protein>
    <recommendedName>
        <fullName evidence="1">3-deoxy-D-manno-octulosonic acid kinase</fullName>
        <shortName evidence="1">Kdo kinase</shortName>
        <ecNumber evidence="1">2.7.1.166</ecNumber>
    </recommendedName>
</protein>
<proteinExistence type="inferred from homology"/>